<organism>
    <name type="scientific">Pseudoalteromonas atlantica (strain T6c / ATCC BAA-1087)</name>
    <dbReference type="NCBI Taxonomy" id="3042615"/>
    <lineage>
        <taxon>Bacteria</taxon>
        <taxon>Pseudomonadati</taxon>
        <taxon>Pseudomonadota</taxon>
        <taxon>Gammaproteobacteria</taxon>
        <taxon>Alteromonadales</taxon>
        <taxon>Alteromonadaceae</taxon>
        <taxon>Paraglaciecola</taxon>
    </lineage>
</organism>
<accession>Q15TS5</accession>
<dbReference type="EC" id="3.5.1.96" evidence="1"/>
<dbReference type="EMBL" id="CP000388">
    <property type="protein sequence ID" value="ABG40713.1"/>
    <property type="molecule type" value="Genomic_DNA"/>
</dbReference>
<dbReference type="RefSeq" id="WP_011574996.1">
    <property type="nucleotide sequence ID" value="NC_008228.1"/>
</dbReference>
<dbReference type="SMR" id="Q15TS5"/>
<dbReference type="STRING" id="342610.Patl_2195"/>
<dbReference type="KEGG" id="pat:Patl_2195"/>
<dbReference type="eggNOG" id="COG2988">
    <property type="taxonomic scope" value="Bacteria"/>
</dbReference>
<dbReference type="HOGENOM" id="CLU_071608_0_0_6"/>
<dbReference type="OrthoDB" id="5290473at2"/>
<dbReference type="UniPathway" id="UPA00185">
    <property type="reaction ID" value="UER00283"/>
</dbReference>
<dbReference type="Proteomes" id="UP000001981">
    <property type="component" value="Chromosome"/>
</dbReference>
<dbReference type="GO" id="GO:0016788">
    <property type="term" value="F:hydrolase activity, acting on ester bonds"/>
    <property type="evidence" value="ECO:0007669"/>
    <property type="project" value="UniProtKB-UniRule"/>
</dbReference>
<dbReference type="GO" id="GO:0009017">
    <property type="term" value="F:succinylglutamate desuccinylase activity"/>
    <property type="evidence" value="ECO:0007669"/>
    <property type="project" value="UniProtKB-EC"/>
</dbReference>
<dbReference type="GO" id="GO:0008270">
    <property type="term" value="F:zinc ion binding"/>
    <property type="evidence" value="ECO:0007669"/>
    <property type="project" value="UniProtKB-UniRule"/>
</dbReference>
<dbReference type="GO" id="GO:0019544">
    <property type="term" value="P:arginine catabolic process to glutamate"/>
    <property type="evidence" value="ECO:0007669"/>
    <property type="project" value="UniProtKB-UniRule"/>
</dbReference>
<dbReference type="GO" id="GO:0019545">
    <property type="term" value="P:arginine catabolic process to succinate"/>
    <property type="evidence" value="ECO:0007669"/>
    <property type="project" value="UniProtKB-UniRule"/>
</dbReference>
<dbReference type="CDD" id="cd03855">
    <property type="entry name" value="M14_ASTE"/>
    <property type="match status" value="1"/>
</dbReference>
<dbReference type="Gene3D" id="3.40.630.10">
    <property type="entry name" value="Zn peptidases"/>
    <property type="match status" value="1"/>
</dbReference>
<dbReference type="HAMAP" id="MF_00767">
    <property type="entry name" value="Arg_catab_AstE"/>
    <property type="match status" value="1"/>
</dbReference>
<dbReference type="InterPro" id="IPR050178">
    <property type="entry name" value="AspA/AstE_fam"/>
</dbReference>
<dbReference type="InterPro" id="IPR055438">
    <property type="entry name" value="AstE_AspA_cat"/>
</dbReference>
<dbReference type="InterPro" id="IPR007036">
    <property type="entry name" value="Aste_AspA_hybrid_dom"/>
</dbReference>
<dbReference type="InterPro" id="IPR016681">
    <property type="entry name" value="SuccinylGlu_desuccinylase"/>
</dbReference>
<dbReference type="NCBIfam" id="TIGR03242">
    <property type="entry name" value="arg_catab_astE"/>
    <property type="match status" value="1"/>
</dbReference>
<dbReference type="NCBIfam" id="NF003706">
    <property type="entry name" value="PRK05324.1"/>
    <property type="match status" value="1"/>
</dbReference>
<dbReference type="PANTHER" id="PTHR15162">
    <property type="entry name" value="ASPARTOACYLASE"/>
    <property type="match status" value="1"/>
</dbReference>
<dbReference type="PANTHER" id="PTHR15162:SF7">
    <property type="entry name" value="SUCCINYLGLUTAMATE DESUCCINYLASE"/>
    <property type="match status" value="1"/>
</dbReference>
<dbReference type="Pfam" id="PF24827">
    <property type="entry name" value="AstE_AspA_cat"/>
    <property type="match status" value="1"/>
</dbReference>
<dbReference type="Pfam" id="PF04952">
    <property type="entry name" value="AstE_AspA_hybrid"/>
    <property type="match status" value="1"/>
</dbReference>
<dbReference type="PIRSF" id="PIRSF017020">
    <property type="entry name" value="AstE"/>
    <property type="match status" value="1"/>
</dbReference>
<dbReference type="SUPFAM" id="SSF53187">
    <property type="entry name" value="Zn-dependent exopeptidases"/>
    <property type="match status" value="1"/>
</dbReference>
<evidence type="ECO:0000255" key="1">
    <source>
        <dbReference type="HAMAP-Rule" id="MF_00767"/>
    </source>
</evidence>
<keyword id="KW-0056">Arginine metabolism</keyword>
<keyword id="KW-0378">Hydrolase</keyword>
<keyword id="KW-0479">Metal-binding</keyword>
<keyword id="KW-0862">Zinc</keyword>
<sequence>MQTVNTHKLISHLQQQGQFLTLSRCSGELVQNPISFTLYEHTQVSIISPGIISFSPKIKSDKAIVLSSGIHGNETAPIEICDQYVIDILTGKIRVAHRILFIFGNLPAMDRATRFVDENLNRLFSHAHASESVDQNSYECARAKEIEEAVAEFYGSGHGEESRYHYDLHTAIRPSKNEKFAVYPFLHGEKHDKEQISFLLACGIDTFLLSGSPTTTFSYYSSRQFGAHAFTVELGKVQAFGQNDMSRFTQVNDTLKRFISGQPLNLKSFNDQDVLIYQVNQVINKHAEDFELDFSDDLPNFSDFPKGTLLAHETGNEYRAEFDGEAVVFPNANVAIGQRAILTVIPTTLD</sequence>
<name>ASTE_PSEA6</name>
<protein>
    <recommendedName>
        <fullName evidence="1">Succinylglutamate desuccinylase</fullName>
        <ecNumber evidence="1">3.5.1.96</ecNumber>
    </recommendedName>
</protein>
<comment type="function">
    <text evidence="1">Transforms N(2)-succinylglutamate into succinate and glutamate.</text>
</comment>
<comment type="catalytic activity">
    <reaction evidence="1">
        <text>N-succinyl-L-glutamate + H2O = L-glutamate + succinate</text>
        <dbReference type="Rhea" id="RHEA:15169"/>
        <dbReference type="ChEBI" id="CHEBI:15377"/>
        <dbReference type="ChEBI" id="CHEBI:29985"/>
        <dbReference type="ChEBI" id="CHEBI:30031"/>
        <dbReference type="ChEBI" id="CHEBI:58763"/>
        <dbReference type="EC" id="3.5.1.96"/>
    </reaction>
</comment>
<comment type="cofactor">
    <cofactor evidence="1">
        <name>Zn(2+)</name>
        <dbReference type="ChEBI" id="CHEBI:29105"/>
    </cofactor>
    <text evidence="1">Binds 1 zinc ion per subunit.</text>
</comment>
<comment type="pathway">
    <text evidence="1">Amino-acid degradation; L-arginine degradation via AST pathway; L-glutamate and succinate from L-arginine: step 5/5.</text>
</comment>
<comment type="similarity">
    <text evidence="1">Belongs to the AspA/AstE family. Succinylglutamate desuccinylase subfamily.</text>
</comment>
<reference key="1">
    <citation type="submission" date="2006-06" db="EMBL/GenBank/DDBJ databases">
        <title>Complete sequence of Pseudoalteromonas atlantica T6c.</title>
        <authorList>
            <consortium name="US DOE Joint Genome Institute"/>
            <person name="Copeland A."/>
            <person name="Lucas S."/>
            <person name="Lapidus A."/>
            <person name="Barry K."/>
            <person name="Detter J.C."/>
            <person name="Glavina del Rio T."/>
            <person name="Hammon N."/>
            <person name="Israni S."/>
            <person name="Dalin E."/>
            <person name="Tice H."/>
            <person name="Pitluck S."/>
            <person name="Saunders E."/>
            <person name="Brettin T."/>
            <person name="Bruce D."/>
            <person name="Han C."/>
            <person name="Tapia R."/>
            <person name="Gilna P."/>
            <person name="Schmutz J."/>
            <person name="Larimer F."/>
            <person name="Land M."/>
            <person name="Hauser L."/>
            <person name="Kyrpides N."/>
            <person name="Kim E."/>
            <person name="Karls A.C."/>
            <person name="Bartlett D."/>
            <person name="Higgins B.P."/>
            <person name="Richardson P."/>
        </authorList>
    </citation>
    <scope>NUCLEOTIDE SEQUENCE [LARGE SCALE GENOMIC DNA]</scope>
    <source>
        <strain>T6c / ATCC BAA-1087</strain>
    </source>
</reference>
<feature type="chain" id="PRO_0000262079" description="Succinylglutamate desuccinylase">
    <location>
        <begin position="1"/>
        <end position="350"/>
    </location>
</feature>
<feature type="active site" evidence="1">
    <location>
        <position position="233"/>
    </location>
</feature>
<feature type="binding site" evidence="1">
    <location>
        <position position="71"/>
    </location>
    <ligand>
        <name>Zn(2+)</name>
        <dbReference type="ChEBI" id="CHEBI:29105"/>
    </ligand>
</feature>
<feature type="binding site" evidence="1">
    <location>
        <position position="74"/>
    </location>
    <ligand>
        <name>Zn(2+)</name>
        <dbReference type="ChEBI" id="CHEBI:29105"/>
    </ligand>
</feature>
<feature type="binding site" evidence="1">
    <location>
        <position position="169"/>
    </location>
    <ligand>
        <name>Zn(2+)</name>
        <dbReference type="ChEBI" id="CHEBI:29105"/>
    </ligand>
</feature>
<gene>
    <name evidence="1" type="primary">astE</name>
    <name type="ordered locus">Patl_2195</name>
</gene>
<proteinExistence type="inferred from homology"/>